<keyword id="KW-0963">Cytoplasm</keyword>
<keyword id="KW-0227">DNA damage</keyword>
<keyword id="KW-0234">DNA repair</keyword>
<keyword id="KW-0539">Nucleus</keyword>
<keyword id="KW-1185">Reference proteome</keyword>
<evidence type="ECO:0000269" key="1">
    <source>
    </source>
</evidence>
<evidence type="ECO:0000269" key="2">
    <source>
    </source>
</evidence>
<evidence type="ECO:0000269" key="3">
    <source>
    </source>
</evidence>
<evidence type="ECO:0000305" key="4">
    <source>
    </source>
</evidence>
<gene>
    <name type="primary">HUG1</name>
    <name type="ordered locus">YML058W-A</name>
</gene>
<reference key="1">
    <citation type="journal article" date="1997" name="Nature">
        <title>The nucleotide sequence of Saccharomyces cerevisiae chromosome XIII.</title>
        <authorList>
            <person name="Bowman S."/>
            <person name="Churcher C.M."/>
            <person name="Badcock K."/>
            <person name="Brown D."/>
            <person name="Chillingworth T."/>
            <person name="Connor R."/>
            <person name="Dedman K."/>
            <person name="Devlin K."/>
            <person name="Gentles S."/>
            <person name="Hamlin N."/>
            <person name="Hunt S."/>
            <person name="Jagels K."/>
            <person name="Lye G."/>
            <person name="Moule S."/>
            <person name="Odell C."/>
            <person name="Pearson D."/>
            <person name="Rajandream M.A."/>
            <person name="Rice P."/>
            <person name="Skelton J."/>
            <person name="Walsh S.V."/>
            <person name="Whitehead S."/>
            <person name="Barrell B.G."/>
        </authorList>
    </citation>
    <scope>NUCLEOTIDE SEQUENCE [LARGE SCALE GENOMIC DNA]</scope>
    <source>
        <strain>ATCC 204508 / S288c</strain>
    </source>
</reference>
<reference key="2">
    <citation type="journal article" date="2014" name="G3 (Bethesda)">
        <title>The reference genome sequence of Saccharomyces cerevisiae: Then and now.</title>
        <authorList>
            <person name="Engel S.R."/>
            <person name="Dietrich F.S."/>
            <person name="Fisk D.G."/>
            <person name="Binkley G."/>
            <person name="Balakrishnan R."/>
            <person name="Costanzo M.C."/>
            <person name="Dwight S.S."/>
            <person name="Hitz B.C."/>
            <person name="Karra K."/>
            <person name="Nash R.S."/>
            <person name="Weng S."/>
            <person name="Wong E.D."/>
            <person name="Lloyd P."/>
            <person name="Skrzypek M.S."/>
            <person name="Miyasato S.R."/>
            <person name="Simison M."/>
            <person name="Cherry J.M."/>
        </authorList>
    </citation>
    <scope>GENOME REANNOTATION</scope>
    <source>
        <strain>ATCC 204508 / S288c</strain>
    </source>
</reference>
<reference key="3">
    <citation type="journal article" date="2007" name="Genome Res.">
        <title>Approaching a complete repository of sequence-verified protein-encoding clones for Saccharomyces cerevisiae.</title>
        <authorList>
            <person name="Hu Y."/>
            <person name="Rolfs A."/>
            <person name="Bhullar B."/>
            <person name="Murthy T.V.S."/>
            <person name="Zhu C."/>
            <person name="Berger M.F."/>
            <person name="Camargo A.A."/>
            <person name="Kelley F."/>
            <person name="McCarron S."/>
            <person name="Jepson D."/>
            <person name="Richardson A."/>
            <person name="Raphael J."/>
            <person name="Moreira D."/>
            <person name="Taycher E."/>
            <person name="Zuo D."/>
            <person name="Mohr S."/>
            <person name="Kane M.F."/>
            <person name="Williamson J."/>
            <person name="Simpson A.J.G."/>
            <person name="Bulyk M.L."/>
            <person name="Harlow E."/>
            <person name="Marsischky G."/>
            <person name="Kolodner R.D."/>
            <person name="LaBaer J."/>
        </authorList>
    </citation>
    <scope>NUCLEOTIDE SEQUENCE [GENOMIC DNA]</scope>
    <source>
        <strain>ATCC 204508 / S288c</strain>
    </source>
</reference>
<reference key="4">
    <citation type="journal article" date="1999" name="Mol. Cell. Biol.">
        <title>NORF5/HUG1 is a component of the MEC1-mediated checkpoint response to DNA damage and replication arrest in Saccharomyces cerevisiae.</title>
        <authorList>
            <person name="Basrai M.A."/>
            <person name="Velculescu V.E."/>
            <person name="Kinzler K.W."/>
            <person name="Hieter P."/>
        </authorList>
    </citation>
    <scope>FUNCTION</scope>
    <scope>INDUCTION</scope>
</reference>
<reference key="5">
    <citation type="journal article" date="2003" name="Nature">
        <title>Global analysis of protein localization in budding yeast.</title>
        <authorList>
            <person name="Huh W.-K."/>
            <person name="Falvo J.V."/>
            <person name="Gerke L.C."/>
            <person name="Carroll A.S."/>
            <person name="Howson R.W."/>
            <person name="Weissman J.S."/>
            <person name="O'Shea E.K."/>
        </authorList>
    </citation>
    <scope>SUBCELLULAR LOCATION [LARGE SCALE ANALYSIS]</scope>
</reference>
<reference key="6">
    <citation type="journal article" date="2005" name="Mol. Cell. Biol.">
        <title>Loss of SOD1 and LYS7 sensitizes Saccharomyces cerevisiae to hydroxyurea and DNA damage agents and downregulates MEC1 pathway effectors.</title>
        <authorList>
            <person name="Carter C.D."/>
            <person name="Kitchen L.E."/>
            <person name="Au W.-C."/>
            <person name="Babic C.M."/>
            <person name="Basrai M.A."/>
        </authorList>
    </citation>
    <scope>INDUCTION</scope>
</reference>
<dbReference type="EMBL" id="Z46729">
    <property type="status" value="NOT_ANNOTATED_CDS"/>
    <property type="molecule type" value="Genomic_DNA"/>
</dbReference>
<dbReference type="EMBL" id="AY557960">
    <property type="protein sequence ID" value="AAS56286.1"/>
    <property type="molecule type" value="Genomic_DNA"/>
</dbReference>
<dbReference type="EMBL" id="BK006946">
    <property type="protein sequence ID" value="DAA09839.1"/>
    <property type="molecule type" value="Genomic_DNA"/>
</dbReference>
<dbReference type="RefSeq" id="NP_219498.1">
    <property type="nucleotide sequence ID" value="NM_001184439.1"/>
</dbReference>
<dbReference type="BioGRID" id="35108">
    <property type="interactions" value="37"/>
</dbReference>
<dbReference type="FunCoup" id="Q6Q5K6">
    <property type="interactions" value="76"/>
</dbReference>
<dbReference type="IntAct" id="Q6Q5K6">
    <property type="interactions" value="15"/>
</dbReference>
<dbReference type="MINT" id="Q6Q5K6"/>
<dbReference type="STRING" id="4932.YML058W-A"/>
<dbReference type="iPTMnet" id="Q6Q5K6"/>
<dbReference type="PaxDb" id="4932-YML058W-A"/>
<dbReference type="PeptideAtlas" id="Q6Q5K6"/>
<dbReference type="EnsemblFungi" id="YML058W-A_mRNA">
    <property type="protein sequence ID" value="YML058W-A"/>
    <property type="gene ID" value="YML058W-A"/>
</dbReference>
<dbReference type="GeneID" id="854944"/>
<dbReference type="KEGG" id="sce:YML058W-A"/>
<dbReference type="AGR" id="SGD:S000007472"/>
<dbReference type="SGD" id="S000007472">
    <property type="gene designation" value="HUG1"/>
</dbReference>
<dbReference type="VEuPathDB" id="FungiDB:YML058W-A"/>
<dbReference type="HOGENOM" id="CLU_2832613_0_0_1"/>
<dbReference type="InParanoid" id="Q6Q5K6"/>
<dbReference type="OrthoDB" id="4039763at2759"/>
<dbReference type="BioCyc" id="YEAST:G3O-33020-MONOMER"/>
<dbReference type="BioGRID-ORCS" id="854944">
    <property type="hits" value="0 hits in 10 CRISPR screens"/>
</dbReference>
<dbReference type="PRO" id="PR:Q6Q5K6"/>
<dbReference type="Proteomes" id="UP000002311">
    <property type="component" value="Chromosome XIII"/>
</dbReference>
<dbReference type="RNAct" id="Q6Q5K6">
    <property type="molecule type" value="protein"/>
</dbReference>
<dbReference type="GO" id="GO:0005737">
    <property type="term" value="C:cytoplasm"/>
    <property type="evidence" value="ECO:0007005"/>
    <property type="project" value="SGD"/>
</dbReference>
<dbReference type="GO" id="GO:0005634">
    <property type="term" value="C:nucleus"/>
    <property type="evidence" value="ECO:0007669"/>
    <property type="project" value="UniProtKB-SubCell"/>
</dbReference>
<dbReference type="GO" id="GO:1990846">
    <property type="term" value="F:ribonucleoside-diphosphate reductase inhibitor activity"/>
    <property type="evidence" value="ECO:0000316"/>
    <property type="project" value="SGD"/>
</dbReference>
<dbReference type="GO" id="GO:0000077">
    <property type="term" value="P:DNA damage checkpoint signaling"/>
    <property type="evidence" value="ECO:0000315"/>
    <property type="project" value="SGD"/>
</dbReference>
<dbReference type="GO" id="GO:0006974">
    <property type="term" value="P:DNA damage response"/>
    <property type="evidence" value="ECO:0000315"/>
    <property type="project" value="SGD"/>
</dbReference>
<dbReference type="GO" id="GO:0006281">
    <property type="term" value="P:DNA repair"/>
    <property type="evidence" value="ECO:0007669"/>
    <property type="project" value="UniProtKB-KW"/>
</dbReference>
<feature type="chain" id="PRO_0000240383" description="MEC1-mediated checkpoint protein HUG1">
    <location>
        <begin position="1"/>
        <end position="68"/>
    </location>
</feature>
<proteinExistence type="evidence at protein level"/>
<sequence length="68" mass="7514">MTMDQGLNPKQFFLDDVVLQDTLCSMSNRVNKSVKTGYLFPKDHVPSANIIAVERRGGLSDIGKNTSN</sequence>
<accession>Q6Q5K6</accession>
<accession>D6VZB5</accession>
<name>HUG1_YEAST</name>
<organism>
    <name type="scientific">Saccharomyces cerevisiae (strain ATCC 204508 / S288c)</name>
    <name type="common">Baker's yeast</name>
    <dbReference type="NCBI Taxonomy" id="559292"/>
    <lineage>
        <taxon>Eukaryota</taxon>
        <taxon>Fungi</taxon>
        <taxon>Dikarya</taxon>
        <taxon>Ascomycota</taxon>
        <taxon>Saccharomycotina</taxon>
        <taxon>Saccharomycetes</taxon>
        <taxon>Saccharomycetales</taxon>
        <taxon>Saccharomycetaceae</taxon>
        <taxon>Saccharomyces</taxon>
    </lineage>
</organism>
<protein>
    <recommendedName>
        <fullName>MEC1-mediated checkpoint protein HUG1</fullName>
    </recommendedName>
</protein>
<comment type="function">
    <text evidence="1">Involved in the MEC1-mediated checkpoint response to DNA damage and replication arrest.</text>
</comment>
<comment type="subcellular location">
    <subcellularLocation>
        <location evidence="2">Cytoplasm</location>
    </subcellularLocation>
    <subcellularLocation>
        <location evidence="4">Nucleus</location>
    </subcellularLocation>
</comment>
<comment type="induction">
    <text evidence="1 3">By replication arrest and DNA damage. Repressed by CYC8, RFX1 and TUP1.</text>
</comment>